<name>SYE1_ROSDO</name>
<comment type="function">
    <text evidence="1">Catalyzes the attachment of glutamate to tRNA(Glu) in a two-step reaction: glutamate is first activated by ATP to form Glu-AMP and then transferred to the acceptor end of tRNA(Glu).</text>
</comment>
<comment type="catalytic activity">
    <reaction evidence="1">
        <text>tRNA(Glu) + L-glutamate + ATP = L-glutamyl-tRNA(Glu) + AMP + diphosphate</text>
        <dbReference type="Rhea" id="RHEA:23540"/>
        <dbReference type="Rhea" id="RHEA-COMP:9663"/>
        <dbReference type="Rhea" id="RHEA-COMP:9680"/>
        <dbReference type="ChEBI" id="CHEBI:29985"/>
        <dbReference type="ChEBI" id="CHEBI:30616"/>
        <dbReference type="ChEBI" id="CHEBI:33019"/>
        <dbReference type="ChEBI" id="CHEBI:78442"/>
        <dbReference type="ChEBI" id="CHEBI:78520"/>
        <dbReference type="ChEBI" id="CHEBI:456215"/>
        <dbReference type="EC" id="6.1.1.17"/>
    </reaction>
</comment>
<comment type="subunit">
    <text evidence="1">Monomer.</text>
</comment>
<comment type="subcellular location">
    <subcellularLocation>
        <location evidence="1">Cytoplasm</location>
    </subcellularLocation>
</comment>
<comment type="similarity">
    <text evidence="1">Belongs to the class-I aminoacyl-tRNA synthetase family. Glutamate--tRNA ligase type 1 subfamily.</text>
</comment>
<accession>Q16AX5</accession>
<dbReference type="EC" id="6.1.1.17" evidence="1"/>
<dbReference type="EMBL" id="CP000362">
    <property type="protein sequence ID" value="ABG30868.1"/>
    <property type="molecule type" value="Genomic_DNA"/>
</dbReference>
<dbReference type="RefSeq" id="WP_011567488.1">
    <property type="nucleotide sequence ID" value="NC_008209.1"/>
</dbReference>
<dbReference type="SMR" id="Q16AX5"/>
<dbReference type="STRING" id="375451.RD1_1219"/>
<dbReference type="KEGG" id="rde:RD1_1219"/>
<dbReference type="eggNOG" id="COG0008">
    <property type="taxonomic scope" value="Bacteria"/>
</dbReference>
<dbReference type="HOGENOM" id="CLU_015768_6_1_5"/>
<dbReference type="OrthoDB" id="9807503at2"/>
<dbReference type="Proteomes" id="UP000007029">
    <property type="component" value="Chromosome"/>
</dbReference>
<dbReference type="GO" id="GO:0005829">
    <property type="term" value="C:cytosol"/>
    <property type="evidence" value="ECO:0007669"/>
    <property type="project" value="TreeGrafter"/>
</dbReference>
<dbReference type="GO" id="GO:0005524">
    <property type="term" value="F:ATP binding"/>
    <property type="evidence" value="ECO:0007669"/>
    <property type="project" value="UniProtKB-UniRule"/>
</dbReference>
<dbReference type="GO" id="GO:0004818">
    <property type="term" value="F:glutamate-tRNA ligase activity"/>
    <property type="evidence" value="ECO:0007669"/>
    <property type="project" value="UniProtKB-UniRule"/>
</dbReference>
<dbReference type="GO" id="GO:0000049">
    <property type="term" value="F:tRNA binding"/>
    <property type="evidence" value="ECO:0007669"/>
    <property type="project" value="InterPro"/>
</dbReference>
<dbReference type="GO" id="GO:0006424">
    <property type="term" value="P:glutamyl-tRNA aminoacylation"/>
    <property type="evidence" value="ECO:0007669"/>
    <property type="project" value="UniProtKB-UniRule"/>
</dbReference>
<dbReference type="Gene3D" id="1.10.10.350">
    <property type="match status" value="1"/>
</dbReference>
<dbReference type="Gene3D" id="3.40.50.620">
    <property type="entry name" value="HUPs"/>
    <property type="match status" value="1"/>
</dbReference>
<dbReference type="HAMAP" id="MF_00022">
    <property type="entry name" value="Glu_tRNA_synth_type1"/>
    <property type="match status" value="1"/>
</dbReference>
<dbReference type="InterPro" id="IPR045462">
    <property type="entry name" value="aa-tRNA-synth_I_cd-bd"/>
</dbReference>
<dbReference type="InterPro" id="IPR020751">
    <property type="entry name" value="aa-tRNA-synth_I_codon-bd_sub2"/>
</dbReference>
<dbReference type="InterPro" id="IPR001412">
    <property type="entry name" value="aa-tRNA-synth_I_CS"/>
</dbReference>
<dbReference type="InterPro" id="IPR008925">
    <property type="entry name" value="aa_tRNA-synth_I_cd-bd_sf"/>
</dbReference>
<dbReference type="InterPro" id="IPR004527">
    <property type="entry name" value="Glu-tRNA-ligase_bac/mito"/>
</dbReference>
<dbReference type="InterPro" id="IPR000924">
    <property type="entry name" value="Glu/Gln-tRNA-synth"/>
</dbReference>
<dbReference type="InterPro" id="IPR020058">
    <property type="entry name" value="Glu/Gln-tRNA-synth_Ib_cat-dom"/>
</dbReference>
<dbReference type="InterPro" id="IPR049940">
    <property type="entry name" value="GluQ/Sye"/>
</dbReference>
<dbReference type="InterPro" id="IPR014729">
    <property type="entry name" value="Rossmann-like_a/b/a_fold"/>
</dbReference>
<dbReference type="NCBIfam" id="TIGR00464">
    <property type="entry name" value="gltX_bact"/>
    <property type="match status" value="1"/>
</dbReference>
<dbReference type="PANTHER" id="PTHR43311">
    <property type="entry name" value="GLUTAMATE--TRNA LIGASE"/>
    <property type="match status" value="1"/>
</dbReference>
<dbReference type="PANTHER" id="PTHR43311:SF2">
    <property type="entry name" value="GLUTAMATE--TRNA LIGASE, MITOCHONDRIAL-RELATED"/>
    <property type="match status" value="1"/>
</dbReference>
<dbReference type="Pfam" id="PF19269">
    <property type="entry name" value="Anticodon_2"/>
    <property type="match status" value="1"/>
</dbReference>
<dbReference type="Pfam" id="PF00749">
    <property type="entry name" value="tRNA-synt_1c"/>
    <property type="match status" value="1"/>
</dbReference>
<dbReference type="PRINTS" id="PR00987">
    <property type="entry name" value="TRNASYNTHGLU"/>
</dbReference>
<dbReference type="SUPFAM" id="SSF48163">
    <property type="entry name" value="An anticodon-binding domain of class I aminoacyl-tRNA synthetases"/>
    <property type="match status" value="1"/>
</dbReference>
<dbReference type="SUPFAM" id="SSF52374">
    <property type="entry name" value="Nucleotidylyl transferase"/>
    <property type="match status" value="1"/>
</dbReference>
<dbReference type="PROSITE" id="PS00178">
    <property type="entry name" value="AA_TRNA_LIGASE_I"/>
    <property type="match status" value="1"/>
</dbReference>
<organism>
    <name type="scientific">Roseobacter denitrificans (strain ATCC 33942 / OCh 114)</name>
    <name type="common">Erythrobacter sp. (strain OCh 114)</name>
    <name type="synonym">Roseobacter denitrificans</name>
    <dbReference type="NCBI Taxonomy" id="375451"/>
    <lineage>
        <taxon>Bacteria</taxon>
        <taxon>Pseudomonadati</taxon>
        <taxon>Pseudomonadota</taxon>
        <taxon>Alphaproteobacteria</taxon>
        <taxon>Rhodobacterales</taxon>
        <taxon>Roseobacteraceae</taxon>
        <taxon>Roseobacter</taxon>
    </lineage>
</organism>
<feature type="chain" id="PRO_0000367764" description="Glutamate--tRNA ligase 1">
    <location>
        <begin position="1"/>
        <end position="441"/>
    </location>
</feature>
<feature type="short sequence motif" description="'HIGH' region" evidence="1">
    <location>
        <begin position="8"/>
        <end position="18"/>
    </location>
</feature>
<feature type="short sequence motif" description="'KMSKS' region" evidence="1">
    <location>
        <begin position="239"/>
        <end position="243"/>
    </location>
</feature>
<feature type="binding site" evidence="1">
    <location>
        <position position="242"/>
    </location>
    <ligand>
        <name>ATP</name>
        <dbReference type="ChEBI" id="CHEBI:30616"/>
    </ligand>
</feature>
<gene>
    <name evidence="1" type="primary">gltX1</name>
    <name type="ordered locus">RD1_1219</name>
</gene>
<protein>
    <recommendedName>
        <fullName evidence="1">Glutamate--tRNA ligase 1</fullName>
        <ecNumber evidence="1">6.1.1.17</ecNumber>
    </recommendedName>
    <alternativeName>
        <fullName evidence="1">Glutamyl-tRNA synthetase 1</fullName>
        <shortName evidence="1">GluRS 1</shortName>
    </alternativeName>
</protein>
<evidence type="ECO:0000255" key="1">
    <source>
        <dbReference type="HAMAP-Rule" id="MF_00022"/>
    </source>
</evidence>
<proteinExistence type="inferred from homology"/>
<keyword id="KW-0030">Aminoacyl-tRNA synthetase</keyword>
<keyword id="KW-0067">ATP-binding</keyword>
<keyword id="KW-0963">Cytoplasm</keyword>
<keyword id="KW-0436">Ligase</keyword>
<keyword id="KW-0547">Nucleotide-binding</keyword>
<keyword id="KW-0648">Protein biosynthesis</keyword>
<keyword id="KW-1185">Reference proteome</keyword>
<reference key="1">
    <citation type="journal article" date="2007" name="J. Bacteriol.">
        <title>The complete genome sequence of Roseobacter denitrificans reveals a mixotrophic rather than photosynthetic metabolism.</title>
        <authorList>
            <person name="Swingley W.D."/>
            <person name="Sadekar S."/>
            <person name="Mastrian S.D."/>
            <person name="Matthies H.J."/>
            <person name="Hao J."/>
            <person name="Ramos H."/>
            <person name="Acharya C.R."/>
            <person name="Conrad A.L."/>
            <person name="Taylor H.L."/>
            <person name="Dejesa L.C."/>
            <person name="Shah M.K."/>
            <person name="O'Huallachain M.E."/>
            <person name="Lince M.T."/>
            <person name="Blankenship R.E."/>
            <person name="Beatty J.T."/>
            <person name="Touchman J.W."/>
        </authorList>
    </citation>
    <scope>NUCLEOTIDE SEQUENCE [LARGE SCALE GENOMIC DNA]</scope>
    <source>
        <strain>ATCC 33942 / OCh 114</strain>
    </source>
</reference>
<sequence>MTTTRFAPSPTGYIHIGNLRTALMNYLIARKAGGTFILRIDDTDPERSKEEYVDGIKQDLEWLGLHWDRIERQSLRLDRYAQAADKLRDMGRFYEAFETPTELDLKRKKQLNMGKPPVYDRAALELSDAEKDALRAERGAGVWRFKLERERIEWADGILGDISIDAASVSDPVLIRGDGQILYTLASVVDDTEMGVTNVVRGSDHVTNTATQIQIINALGGTVPDFAHHSLLTGPQGEALSKRLGTLALRDLRENGVQPAALLSLMARLGSSDPVELQTDMADLIEGFDISRFGSAPTKFDADDLYPLTARYLAGLPLADVAGDLSAAGVPDDMAAQFWDVTRENITTLKDIGPWWTLMRDGAEPQIDDEDREFVAEALALLPDGPFDATTWGTWTAAVKEKTGRKGRALFMPLRKALTGQSHGPDMSGLMPLLQVVKARR</sequence>